<evidence type="ECO:0000255" key="1">
    <source>
        <dbReference type="HAMAP-Rule" id="MF_01666"/>
    </source>
</evidence>
<protein>
    <recommendedName>
        <fullName evidence="1">Glyoxylate/hydroxypyruvate reductase A</fullName>
        <ecNumber evidence="1">1.1.1.79</ecNumber>
        <ecNumber evidence="1">1.1.1.81</ecNumber>
    </recommendedName>
    <alternativeName>
        <fullName evidence="1">2-ketoacid reductase</fullName>
    </alternativeName>
</protein>
<gene>
    <name evidence="1" type="primary">ghrA</name>
    <name type="ordered locus">Spro_1933</name>
</gene>
<feature type="chain" id="PRO_0000348373" description="Glyoxylate/hydroxypyruvate reductase A">
    <location>
        <begin position="1"/>
        <end position="313"/>
    </location>
</feature>
<feature type="active site" evidence="1">
    <location>
        <position position="228"/>
    </location>
</feature>
<feature type="active site" description="Proton donor" evidence="1">
    <location>
        <position position="276"/>
    </location>
</feature>
<name>GHRA_SERP5</name>
<keyword id="KW-0963">Cytoplasm</keyword>
<keyword id="KW-0520">NAD</keyword>
<keyword id="KW-0521">NADP</keyword>
<keyword id="KW-0560">Oxidoreductase</keyword>
<organism>
    <name type="scientific">Serratia proteamaculans (strain 568)</name>
    <dbReference type="NCBI Taxonomy" id="399741"/>
    <lineage>
        <taxon>Bacteria</taxon>
        <taxon>Pseudomonadati</taxon>
        <taxon>Pseudomonadota</taxon>
        <taxon>Gammaproteobacteria</taxon>
        <taxon>Enterobacterales</taxon>
        <taxon>Yersiniaceae</taxon>
        <taxon>Serratia</taxon>
    </lineage>
</organism>
<sequence>MNIIFYHPFFNAEEWLAGLSQRLPQAQVRAWQPGDDRPADYALVWRPPHEMLANRGRLKGVFALGAGVDAILEQERAYPGTLPAGVPLLRLEDTGMAQQMQEYALSYVLRYFRRFDEYQLLQQQQEWRPLDPHQQDNFTIGILGAGVLGKSVAQKLTAFGFNVRCWSRSPKQIDGVQSFAGAEQRAAFLDGVQLLINLLPNTPETAGILNQQLFAHLAPGAYLINLARGAHLVEDDLLQALEQGQLAAATLDVFVTEPLPQAHPFWRHPRVTITPHIAAITLPQAAMDQIAANILALEAGQTPAGVVDVLLGY</sequence>
<reference key="1">
    <citation type="submission" date="2007-09" db="EMBL/GenBank/DDBJ databases">
        <title>Complete sequence of chromosome of Serratia proteamaculans 568.</title>
        <authorList>
            <consortium name="US DOE Joint Genome Institute"/>
            <person name="Copeland A."/>
            <person name="Lucas S."/>
            <person name="Lapidus A."/>
            <person name="Barry K."/>
            <person name="Glavina del Rio T."/>
            <person name="Dalin E."/>
            <person name="Tice H."/>
            <person name="Pitluck S."/>
            <person name="Chain P."/>
            <person name="Malfatti S."/>
            <person name="Shin M."/>
            <person name="Vergez L."/>
            <person name="Schmutz J."/>
            <person name="Larimer F."/>
            <person name="Land M."/>
            <person name="Hauser L."/>
            <person name="Kyrpides N."/>
            <person name="Kim E."/>
            <person name="Taghavi S."/>
            <person name="Newman L."/>
            <person name="Vangronsveld J."/>
            <person name="van der Lelie D."/>
            <person name="Richardson P."/>
        </authorList>
    </citation>
    <scope>NUCLEOTIDE SEQUENCE [LARGE SCALE GENOMIC DNA]</scope>
    <source>
        <strain>568</strain>
    </source>
</reference>
<proteinExistence type="inferred from homology"/>
<dbReference type="EC" id="1.1.1.79" evidence="1"/>
<dbReference type="EC" id="1.1.1.81" evidence="1"/>
<dbReference type="EMBL" id="CP000826">
    <property type="protein sequence ID" value="ABV41036.1"/>
    <property type="molecule type" value="Genomic_DNA"/>
</dbReference>
<dbReference type="SMR" id="A8GD46"/>
<dbReference type="STRING" id="399741.Spro_1933"/>
<dbReference type="KEGG" id="spe:Spro_1933"/>
<dbReference type="eggNOG" id="COG0111">
    <property type="taxonomic scope" value="Bacteria"/>
</dbReference>
<dbReference type="HOGENOM" id="CLU_019796_1_0_6"/>
<dbReference type="OrthoDB" id="9787219at2"/>
<dbReference type="GO" id="GO:0005737">
    <property type="term" value="C:cytoplasm"/>
    <property type="evidence" value="ECO:0007669"/>
    <property type="project" value="UniProtKB-SubCell"/>
</dbReference>
<dbReference type="GO" id="GO:0030267">
    <property type="term" value="F:glyoxylate reductase (NADPH) activity"/>
    <property type="evidence" value="ECO:0007669"/>
    <property type="project" value="UniProtKB-UniRule"/>
</dbReference>
<dbReference type="GO" id="GO:0008465">
    <property type="term" value="F:hydroxypyruvate reductase (NADH) activity"/>
    <property type="evidence" value="ECO:0007669"/>
    <property type="project" value="RHEA"/>
</dbReference>
<dbReference type="GO" id="GO:0120509">
    <property type="term" value="F:hydroxypyruvate reductase (NADPH) activity"/>
    <property type="evidence" value="ECO:0007669"/>
    <property type="project" value="RHEA"/>
</dbReference>
<dbReference type="GO" id="GO:0051287">
    <property type="term" value="F:NAD binding"/>
    <property type="evidence" value="ECO:0007669"/>
    <property type="project" value="InterPro"/>
</dbReference>
<dbReference type="CDD" id="cd12164">
    <property type="entry name" value="GDH_like_2"/>
    <property type="match status" value="1"/>
</dbReference>
<dbReference type="FunFam" id="3.40.50.720:FF:000110">
    <property type="entry name" value="Glyoxylate/hydroxypyruvate reductase A"/>
    <property type="match status" value="1"/>
</dbReference>
<dbReference type="Gene3D" id="3.40.50.720">
    <property type="entry name" value="NAD(P)-binding Rossmann-like Domain"/>
    <property type="match status" value="2"/>
</dbReference>
<dbReference type="HAMAP" id="MF_01666">
    <property type="entry name" value="2_Hacid_dh_C_GhrA"/>
    <property type="match status" value="1"/>
</dbReference>
<dbReference type="InterPro" id="IPR029753">
    <property type="entry name" value="D-isomer_DH_CS"/>
</dbReference>
<dbReference type="InterPro" id="IPR006140">
    <property type="entry name" value="D-isomer_DH_NAD-bd"/>
</dbReference>
<dbReference type="InterPro" id="IPR023514">
    <property type="entry name" value="GhrA_Enterobacterales"/>
</dbReference>
<dbReference type="InterPro" id="IPR036291">
    <property type="entry name" value="NAD(P)-bd_dom_sf"/>
</dbReference>
<dbReference type="NCBIfam" id="NF012013">
    <property type="entry name" value="PRK15469.1"/>
    <property type="match status" value="1"/>
</dbReference>
<dbReference type="PANTHER" id="PTHR43333">
    <property type="entry name" value="2-HACID_DH_C DOMAIN-CONTAINING PROTEIN"/>
    <property type="match status" value="1"/>
</dbReference>
<dbReference type="PANTHER" id="PTHR43333:SF1">
    <property type="entry name" value="D-ISOMER SPECIFIC 2-HYDROXYACID DEHYDROGENASE NAD-BINDING DOMAIN-CONTAINING PROTEIN"/>
    <property type="match status" value="1"/>
</dbReference>
<dbReference type="Pfam" id="PF02826">
    <property type="entry name" value="2-Hacid_dh_C"/>
    <property type="match status" value="1"/>
</dbReference>
<dbReference type="SUPFAM" id="SSF51735">
    <property type="entry name" value="NAD(P)-binding Rossmann-fold domains"/>
    <property type="match status" value="1"/>
</dbReference>
<dbReference type="PROSITE" id="PS00671">
    <property type="entry name" value="D_2_HYDROXYACID_DH_3"/>
    <property type="match status" value="1"/>
</dbReference>
<comment type="function">
    <text evidence="1">Catalyzes the NADPH-dependent reduction of glyoxylate and hydroxypyruvate into glycolate and glycerate, respectively.</text>
</comment>
<comment type="catalytic activity">
    <reaction evidence="1">
        <text>glycolate + NADP(+) = glyoxylate + NADPH + H(+)</text>
        <dbReference type="Rhea" id="RHEA:10992"/>
        <dbReference type="ChEBI" id="CHEBI:15378"/>
        <dbReference type="ChEBI" id="CHEBI:29805"/>
        <dbReference type="ChEBI" id="CHEBI:36655"/>
        <dbReference type="ChEBI" id="CHEBI:57783"/>
        <dbReference type="ChEBI" id="CHEBI:58349"/>
        <dbReference type="EC" id="1.1.1.79"/>
    </reaction>
</comment>
<comment type="catalytic activity">
    <reaction evidence="1">
        <text>(R)-glycerate + NAD(+) = 3-hydroxypyruvate + NADH + H(+)</text>
        <dbReference type="Rhea" id="RHEA:17905"/>
        <dbReference type="ChEBI" id="CHEBI:15378"/>
        <dbReference type="ChEBI" id="CHEBI:16659"/>
        <dbReference type="ChEBI" id="CHEBI:17180"/>
        <dbReference type="ChEBI" id="CHEBI:57540"/>
        <dbReference type="ChEBI" id="CHEBI:57945"/>
        <dbReference type="EC" id="1.1.1.81"/>
    </reaction>
</comment>
<comment type="catalytic activity">
    <reaction evidence="1">
        <text>(R)-glycerate + NADP(+) = 3-hydroxypyruvate + NADPH + H(+)</text>
        <dbReference type="Rhea" id="RHEA:18657"/>
        <dbReference type="ChEBI" id="CHEBI:15378"/>
        <dbReference type="ChEBI" id="CHEBI:16659"/>
        <dbReference type="ChEBI" id="CHEBI:17180"/>
        <dbReference type="ChEBI" id="CHEBI:57783"/>
        <dbReference type="ChEBI" id="CHEBI:58349"/>
        <dbReference type="EC" id="1.1.1.81"/>
    </reaction>
</comment>
<comment type="subcellular location">
    <subcellularLocation>
        <location evidence="1">Cytoplasm</location>
    </subcellularLocation>
</comment>
<comment type="similarity">
    <text evidence="1">Belongs to the D-isomer specific 2-hydroxyacid dehydrogenase family. GhrA subfamily.</text>
</comment>
<accession>A8GD46</accession>